<sequence>MVNEQKRFALFLATSDSTFVKKAYGGYFNVFVSTFGEDGEQWDLFRVIDGEFPDDKDLDKYDGFVISGSLNDAFGDDDWIVKLCSLCQKLDDMKKKVLGICFGHQILSRIKGGKVGRASRGLDMGLRSITMVTDAVKPGGYFGSQIPKSLAIIKCHQDEVLELPESATLLAYSDKYNVEMCSYGNHLLGIQGHPEYNKEILFEIIDRVVNLKLMEQDFADKAKATMENAEPDRKQWQTLCKNFLKGRSEQV</sequence>
<gene>
    <name evidence="3" type="primary">GGP5</name>
    <name evidence="4" type="ordered locus">At2g23970</name>
</gene>
<keyword id="KW-0963">Cytoplasm</keyword>
<keyword id="KW-0378">Hydrolase</keyword>
<keyword id="KW-0645">Protease</keyword>
<keyword id="KW-1185">Reference proteome</keyword>
<feature type="chain" id="PRO_0000435504" description="Gamma-glutamyl peptidase 5">
    <location>
        <begin position="1"/>
        <end position="251"/>
    </location>
</feature>
<feature type="domain" description="Glutamine amidotransferase type-1" evidence="2">
    <location>
        <begin position="17"/>
        <end position="214"/>
    </location>
</feature>
<feature type="active site" description="Nucleophile" evidence="2">
    <location>
        <position position="101"/>
    </location>
</feature>
<feature type="active site" evidence="2">
    <location>
        <position position="193"/>
    </location>
</feature>
<feature type="active site" evidence="2">
    <location>
        <position position="195"/>
    </location>
</feature>
<evidence type="ECO:0000250" key="1">
    <source>
        <dbReference type="UniProtKB" id="Q9M0A7"/>
    </source>
</evidence>
<evidence type="ECO:0000255" key="2">
    <source>
        <dbReference type="PROSITE-ProRule" id="PRU00605"/>
    </source>
</evidence>
<evidence type="ECO:0000305" key="3"/>
<evidence type="ECO:0000312" key="4">
    <source>
        <dbReference type="Araport" id="AT2G23970"/>
    </source>
</evidence>
<accession>O82225</accession>
<comment type="function">
    <text evidence="1">Involved in glucosinolate biosynthesis. Hydrolyzes the gamma-glutamyl peptide bond of several glutathione (GSH) conjugates to produce Cys-Gly conjugates related to glucosinolates. The gamma-Glu-Cys-Gly-GSH conjugates are the sulfur-donating molecule in glucosinolate biosynthesis.</text>
</comment>
<comment type="pathway">
    <text evidence="3">Secondary metabolite biosynthesis.</text>
</comment>
<comment type="subcellular location">
    <subcellularLocation>
        <location evidence="1">Cytoplasm</location>
        <location evidence="1">Cytosol</location>
    </subcellularLocation>
</comment>
<comment type="similarity">
    <text evidence="3">Belongs to the peptidase C26 family.</text>
</comment>
<name>GGP5_ARATH</name>
<proteinExistence type="evidence at transcript level"/>
<reference key="1">
    <citation type="journal article" date="1999" name="Nature">
        <title>Sequence and analysis of chromosome 2 of the plant Arabidopsis thaliana.</title>
        <authorList>
            <person name="Lin X."/>
            <person name="Kaul S."/>
            <person name="Rounsley S.D."/>
            <person name="Shea T.P."/>
            <person name="Benito M.-I."/>
            <person name="Town C.D."/>
            <person name="Fujii C.Y."/>
            <person name="Mason T.M."/>
            <person name="Bowman C.L."/>
            <person name="Barnstead M.E."/>
            <person name="Feldblyum T.V."/>
            <person name="Buell C.R."/>
            <person name="Ketchum K.A."/>
            <person name="Lee J.J."/>
            <person name="Ronning C.M."/>
            <person name="Koo H.L."/>
            <person name="Moffat K.S."/>
            <person name="Cronin L.A."/>
            <person name="Shen M."/>
            <person name="Pai G."/>
            <person name="Van Aken S."/>
            <person name="Umayam L."/>
            <person name="Tallon L.J."/>
            <person name="Gill J.E."/>
            <person name="Adams M.D."/>
            <person name="Carrera A.J."/>
            <person name="Creasy T.H."/>
            <person name="Goodman H.M."/>
            <person name="Somerville C.R."/>
            <person name="Copenhaver G.P."/>
            <person name="Preuss D."/>
            <person name="Nierman W.C."/>
            <person name="White O."/>
            <person name="Eisen J.A."/>
            <person name="Salzberg S.L."/>
            <person name="Fraser C.M."/>
            <person name="Venter J.C."/>
        </authorList>
    </citation>
    <scope>NUCLEOTIDE SEQUENCE [LARGE SCALE GENOMIC DNA]</scope>
    <source>
        <strain>cv. Columbia</strain>
    </source>
</reference>
<reference key="2">
    <citation type="journal article" date="2017" name="Plant J.">
        <title>Araport11: a complete reannotation of the Arabidopsis thaliana reference genome.</title>
        <authorList>
            <person name="Cheng C.Y."/>
            <person name="Krishnakumar V."/>
            <person name="Chan A.P."/>
            <person name="Thibaud-Nissen F."/>
            <person name="Schobel S."/>
            <person name="Town C.D."/>
        </authorList>
    </citation>
    <scope>GENOME REANNOTATION</scope>
    <source>
        <strain>cv. Columbia</strain>
    </source>
</reference>
<reference key="3">
    <citation type="submission" date="2005-05" db="EMBL/GenBank/DDBJ databases">
        <authorList>
            <person name="Underwood B.A."/>
            <person name="Xiao Y.-L."/>
            <person name="Moskal W.A. Jr."/>
            <person name="Monaghan E.L."/>
            <person name="Wang W."/>
            <person name="Redman J.C."/>
            <person name="Wu H.C."/>
            <person name="Utterback T."/>
            <person name="Town C.D."/>
        </authorList>
    </citation>
    <scope>NUCLEOTIDE SEQUENCE [LARGE SCALE MRNA]</scope>
    <source>
        <strain>cv. Columbia</strain>
    </source>
</reference>
<organism>
    <name type="scientific">Arabidopsis thaliana</name>
    <name type="common">Mouse-ear cress</name>
    <dbReference type="NCBI Taxonomy" id="3702"/>
    <lineage>
        <taxon>Eukaryota</taxon>
        <taxon>Viridiplantae</taxon>
        <taxon>Streptophyta</taxon>
        <taxon>Embryophyta</taxon>
        <taxon>Tracheophyta</taxon>
        <taxon>Spermatophyta</taxon>
        <taxon>Magnoliopsida</taxon>
        <taxon>eudicotyledons</taxon>
        <taxon>Gunneridae</taxon>
        <taxon>Pentapetalae</taxon>
        <taxon>rosids</taxon>
        <taxon>malvids</taxon>
        <taxon>Brassicales</taxon>
        <taxon>Brassicaceae</taxon>
        <taxon>Camelineae</taxon>
        <taxon>Arabidopsis</taxon>
    </lineage>
</organism>
<protein>
    <recommendedName>
        <fullName evidence="3">Gamma-glutamyl peptidase 5</fullName>
        <ecNumber evidence="3">3.4.19.-</ecNumber>
    </recommendedName>
</protein>
<dbReference type="EC" id="3.4.19.-" evidence="3"/>
<dbReference type="EMBL" id="AC005170">
    <property type="protein sequence ID" value="AAC63665.1"/>
    <property type="molecule type" value="Genomic_DNA"/>
</dbReference>
<dbReference type="EMBL" id="CP002685">
    <property type="protein sequence ID" value="AEC07509.1"/>
    <property type="molecule type" value="Genomic_DNA"/>
</dbReference>
<dbReference type="EMBL" id="DQ056540">
    <property type="protein sequence ID" value="AAY78692.1"/>
    <property type="molecule type" value="mRNA"/>
</dbReference>
<dbReference type="PIR" id="A84631">
    <property type="entry name" value="A84631"/>
</dbReference>
<dbReference type="RefSeq" id="NP_179975.1">
    <property type="nucleotide sequence ID" value="NM_127959.2"/>
</dbReference>
<dbReference type="SMR" id="O82225"/>
<dbReference type="FunCoup" id="O82225">
    <property type="interactions" value="79"/>
</dbReference>
<dbReference type="STRING" id="3702.O82225"/>
<dbReference type="MEROPS" id="C26.A05"/>
<dbReference type="PaxDb" id="3702-AT2G23970.1"/>
<dbReference type="ProteomicsDB" id="224784"/>
<dbReference type="EnsemblPlants" id="AT2G23970.1">
    <property type="protein sequence ID" value="AT2G23970.1"/>
    <property type="gene ID" value="AT2G23970"/>
</dbReference>
<dbReference type="GeneID" id="816930"/>
<dbReference type="Gramene" id="AT2G23970.1">
    <property type="protein sequence ID" value="AT2G23970.1"/>
    <property type="gene ID" value="AT2G23970"/>
</dbReference>
<dbReference type="KEGG" id="ath:AT2G23970"/>
<dbReference type="Araport" id="AT2G23970"/>
<dbReference type="TAIR" id="AT2G23970"/>
<dbReference type="eggNOG" id="KOG3179">
    <property type="taxonomic scope" value="Eukaryota"/>
</dbReference>
<dbReference type="HOGENOM" id="CLU_054974_0_1_1"/>
<dbReference type="InParanoid" id="O82225"/>
<dbReference type="OMA" id="EMCSYGN"/>
<dbReference type="OrthoDB" id="92161at2759"/>
<dbReference type="PhylomeDB" id="O82225"/>
<dbReference type="PRO" id="PR:O82225"/>
<dbReference type="Proteomes" id="UP000006548">
    <property type="component" value="Chromosome 2"/>
</dbReference>
<dbReference type="ExpressionAtlas" id="O82225">
    <property type="expression patterns" value="baseline and differential"/>
</dbReference>
<dbReference type="GO" id="GO:0005829">
    <property type="term" value="C:cytosol"/>
    <property type="evidence" value="ECO:0007669"/>
    <property type="project" value="UniProtKB-SubCell"/>
</dbReference>
<dbReference type="GO" id="GO:0008233">
    <property type="term" value="F:peptidase activity"/>
    <property type="evidence" value="ECO:0007669"/>
    <property type="project" value="UniProtKB-KW"/>
</dbReference>
<dbReference type="GO" id="GO:0006508">
    <property type="term" value="P:proteolysis"/>
    <property type="evidence" value="ECO:0007669"/>
    <property type="project" value="UniProtKB-KW"/>
</dbReference>
<dbReference type="CDD" id="cd01741">
    <property type="entry name" value="GATase1_1"/>
    <property type="match status" value="1"/>
</dbReference>
<dbReference type="FunFam" id="3.40.50.880:FF:000040">
    <property type="entry name" value="Gamma-glutamyl peptidase 5"/>
    <property type="match status" value="1"/>
</dbReference>
<dbReference type="Gene3D" id="3.40.50.880">
    <property type="match status" value="1"/>
</dbReference>
<dbReference type="InterPro" id="IPR044992">
    <property type="entry name" value="ChyE-like"/>
</dbReference>
<dbReference type="InterPro" id="IPR029062">
    <property type="entry name" value="Class_I_gatase-like"/>
</dbReference>
<dbReference type="InterPro" id="IPR017926">
    <property type="entry name" value="GATASE"/>
</dbReference>
<dbReference type="PANTHER" id="PTHR42695:SF9">
    <property type="entry name" value="GAMMA-GLUTAMYL PEPTIDASE 2-RELATED"/>
    <property type="match status" value="1"/>
</dbReference>
<dbReference type="PANTHER" id="PTHR42695">
    <property type="entry name" value="GLUTAMINE AMIDOTRANSFERASE YLR126C-RELATED"/>
    <property type="match status" value="1"/>
</dbReference>
<dbReference type="Pfam" id="PF00117">
    <property type="entry name" value="GATase"/>
    <property type="match status" value="1"/>
</dbReference>
<dbReference type="SUPFAM" id="SSF52317">
    <property type="entry name" value="Class I glutamine amidotransferase-like"/>
    <property type="match status" value="1"/>
</dbReference>
<dbReference type="PROSITE" id="PS51273">
    <property type="entry name" value="GATASE_TYPE_1"/>
    <property type="match status" value="1"/>
</dbReference>